<protein>
    <recommendedName>
        <fullName>Mitosis initiation protein fs(1)Ya</fullName>
    </recommendedName>
</protein>
<organism>
    <name type="scientific">Drosophila melanogaster</name>
    <name type="common">Fruit fly</name>
    <dbReference type="NCBI Taxonomy" id="7227"/>
    <lineage>
        <taxon>Eukaryota</taxon>
        <taxon>Metazoa</taxon>
        <taxon>Ecdysozoa</taxon>
        <taxon>Arthropoda</taxon>
        <taxon>Hexapoda</taxon>
        <taxon>Insecta</taxon>
        <taxon>Pterygota</taxon>
        <taxon>Neoptera</taxon>
        <taxon>Endopterygota</taxon>
        <taxon>Diptera</taxon>
        <taxon>Brachycera</taxon>
        <taxon>Muscomorpha</taxon>
        <taxon>Ephydroidea</taxon>
        <taxon>Drosophilidae</taxon>
        <taxon>Drosophila</taxon>
        <taxon>Sophophora</taxon>
    </lineage>
</organism>
<keyword id="KW-0131">Cell cycle</keyword>
<keyword id="KW-0132">Cell division</keyword>
<keyword id="KW-0963">Cytoplasm</keyword>
<keyword id="KW-0498">Mitosis</keyword>
<keyword id="KW-0539">Nucleus</keyword>
<keyword id="KW-0597">Phosphoprotein</keyword>
<keyword id="KW-1185">Reference proteome</keyword>
<sequence>MSFSNVLIMRQPDEGKCHICKRVFCCGKCRQKHQFKAHAIAVREPLGLRSAGGGIIEHRHQMESGATTIYVFCPICERRPLLLREEMHGELLAHIETCHLPLRCRKCQRNYTRVDDLREFSKCVDQQQSCTDVTGATETSKATLKKAANSTAISTQTSPSVTPISLINMRWKAKSRVTHEEFISDSVSSIRNLSSFSNSSIRRSIGQLGVNPSETMEKGKVIRSTSTPLHVESVFAKPKEPITFNASTGGHVSSIYHEEPSPTPESNPVQQQQQQQQPLQQRAWKMGARNKMSAATPLRQVMSKSIQKAFVEHGGMMVHQPPSAVVQRRVRLDLSEHSSHEAAGSSALDLRLSPAMRRTQSESSASEVNSGSSSSYSTSRNADLCKRQFLLSAQKLTTESIIITRTNSSSQKTSSTVYNSCESVEIIRSTSESAEVCHVPAITPIRVTGAGINKKQIKFETPPKSSQQMRSNGEGDETKDQFFTPEPGTPEIPERRHRQAIVPRQLSGEFSPKKDKPKEKGLAVMALISPPLQQPRVRPPLRECRQQRVYSGVQDVGEPEVVDAEEEDEVFRPTNASTCNDKKLEAPNSGRLWSLMSSMMRLPASLRGEREKDRDRDRDSDKENAGSGSLIRRCASIAGSLVRPSARDSSMEDQQCLKRKRTQTLDSQYCSPLSPSSSSKRYRIRPREPIERMRRQ</sequence>
<name>FSYA_DROME</name>
<reference key="1">
    <citation type="journal article" date="1991" name="Cell">
        <title>The Drosophila maternal-effect gene fs(1)Ya encodes a cell cycle-dependent nuclear envelope component required for embryonic mitosis.</title>
        <authorList>
            <person name="Lin H."/>
            <person name="Wolfner M.F."/>
        </authorList>
    </citation>
    <scope>NUCLEOTIDE SEQUENCE [MRNA]</scope>
    <source>
        <tissue>Embryo</tissue>
    </source>
</reference>
<reference key="2">
    <citation type="submission" date="1993-01" db="EMBL/GenBank/DDBJ databases">
        <authorList>
            <person name="Liu J."/>
            <person name="Wolfner M.F."/>
        </authorList>
    </citation>
    <scope>SEQUENCE REVISION</scope>
</reference>
<reference key="3">
    <citation type="journal article" date="2000" name="Science">
        <title>The genome sequence of Drosophila melanogaster.</title>
        <authorList>
            <person name="Adams M.D."/>
            <person name="Celniker S.E."/>
            <person name="Holt R.A."/>
            <person name="Evans C.A."/>
            <person name="Gocayne J.D."/>
            <person name="Amanatides P.G."/>
            <person name="Scherer S.E."/>
            <person name="Li P.W."/>
            <person name="Hoskins R.A."/>
            <person name="Galle R.F."/>
            <person name="George R.A."/>
            <person name="Lewis S.E."/>
            <person name="Richards S."/>
            <person name="Ashburner M."/>
            <person name="Henderson S.N."/>
            <person name="Sutton G.G."/>
            <person name="Wortman J.R."/>
            <person name="Yandell M.D."/>
            <person name="Zhang Q."/>
            <person name="Chen L.X."/>
            <person name="Brandon R.C."/>
            <person name="Rogers Y.-H.C."/>
            <person name="Blazej R.G."/>
            <person name="Champe M."/>
            <person name="Pfeiffer B.D."/>
            <person name="Wan K.H."/>
            <person name="Doyle C."/>
            <person name="Baxter E.G."/>
            <person name="Helt G."/>
            <person name="Nelson C.R."/>
            <person name="Miklos G.L.G."/>
            <person name="Abril J.F."/>
            <person name="Agbayani A."/>
            <person name="An H.-J."/>
            <person name="Andrews-Pfannkoch C."/>
            <person name="Baldwin D."/>
            <person name="Ballew R.M."/>
            <person name="Basu A."/>
            <person name="Baxendale J."/>
            <person name="Bayraktaroglu L."/>
            <person name="Beasley E.M."/>
            <person name="Beeson K.Y."/>
            <person name="Benos P.V."/>
            <person name="Berman B.P."/>
            <person name="Bhandari D."/>
            <person name="Bolshakov S."/>
            <person name="Borkova D."/>
            <person name="Botchan M.R."/>
            <person name="Bouck J."/>
            <person name="Brokstein P."/>
            <person name="Brottier P."/>
            <person name="Burtis K.C."/>
            <person name="Busam D.A."/>
            <person name="Butler H."/>
            <person name="Cadieu E."/>
            <person name="Center A."/>
            <person name="Chandra I."/>
            <person name="Cherry J.M."/>
            <person name="Cawley S."/>
            <person name="Dahlke C."/>
            <person name="Davenport L.B."/>
            <person name="Davies P."/>
            <person name="de Pablos B."/>
            <person name="Delcher A."/>
            <person name="Deng Z."/>
            <person name="Mays A.D."/>
            <person name="Dew I."/>
            <person name="Dietz S.M."/>
            <person name="Dodson K."/>
            <person name="Doup L.E."/>
            <person name="Downes M."/>
            <person name="Dugan-Rocha S."/>
            <person name="Dunkov B.C."/>
            <person name="Dunn P."/>
            <person name="Durbin K.J."/>
            <person name="Evangelista C.C."/>
            <person name="Ferraz C."/>
            <person name="Ferriera S."/>
            <person name="Fleischmann W."/>
            <person name="Fosler C."/>
            <person name="Gabrielian A.E."/>
            <person name="Garg N.S."/>
            <person name="Gelbart W.M."/>
            <person name="Glasser K."/>
            <person name="Glodek A."/>
            <person name="Gong F."/>
            <person name="Gorrell J.H."/>
            <person name="Gu Z."/>
            <person name="Guan P."/>
            <person name="Harris M."/>
            <person name="Harris N.L."/>
            <person name="Harvey D.A."/>
            <person name="Heiman T.J."/>
            <person name="Hernandez J.R."/>
            <person name="Houck J."/>
            <person name="Hostin D."/>
            <person name="Houston K.A."/>
            <person name="Howland T.J."/>
            <person name="Wei M.-H."/>
            <person name="Ibegwam C."/>
            <person name="Jalali M."/>
            <person name="Kalush F."/>
            <person name="Karpen G.H."/>
            <person name="Ke Z."/>
            <person name="Kennison J.A."/>
            <person name="Ketchum K.A."/>
            <person name="Kimmel B.E."/>
            <person name="Kodira C.D."/>
            <person name="Kraft C.L."/>
            <person name="Kravitz S."/>
            <person name="Kulp D."/>
            <person name="Lai Z."/>
            <person name="Lasko P."/>
            <person name="Lei Y."/>
            <person name="Levitsky A.A."/>
            <person name="Li J.H."/>
            <person name="Li Z."/>
            <person name="Liang Y."/>
            <person name="Lin X."/>
            <person name="Liu X."/>
            <person name="Mattei B."/>
            <person name="McIntosh T.C."/>
            <person name="McLeod M.P."/>
            <person name="McPherson D."/>
            <person name="Merkulov G."/>
            <person name="Milshina N.V."/>
            <person name="Mobarry C."/>
            <person name="Morris J."/>
            <person name="Moshrefi A."/>
            <person name="Mount S.M."/>
            <person name="Moy M."/>
            <person name="Murphy B."/>
            <person name="Murphy L."/>
            <person name="Muzny D.M."/>
            <person name="Nelson D.L."/>
            <person name="Nelson D.R."/>
            <person name="Nelson K.A."/>
            <person name="Nixon K."/>
            <person name="Nusskern D.R."/>
            <person name="Pacleb J.M."/>
            <person name="Palazzolo M."/>
            <person name="Pittman G.S."/>
            <person name="Pan S."/>
            <person name="Pollard J."/>
            <person name="Puri V."/>
            <person name="Reese M.G."/>
            <person name="Reinert K."/>
            <person name="Remington K."/>
            <person name="Saunders R.D.C."/>
            <person name="Scheeler F."/>
            <person name="Shen H."/>
            <person name="Shue B.C."/>
            <person name="Siden-Kiamos I."/>
            <person name="Simpson M."/>
            <person name="Skupski M.P."/>
            <person name="Smith T.J."/>
            <person name="Spier E."/>
            <person name="Spradling A.C."/>
            <person name="Stapleton M."/>
            <person name="Strong R."/>
            <person name="Sun E."/>
            <person name="Svirskas R."/>
            <person name="Tector C."/>
            <person name="Turner R."/>
            <person name="Venter E."/>
            <person name="Wang A.H."/>
            <person name="Wang X."/>
            <person name="Wang Z.-Y."/>
            <person name="Wassarman D.A."/>
            <person name="Weinstock G.M."/>
            <person name="Weissenbach J."/>
            <person name="Williams S.M."/>
            <person name="Woodage T."/>
            <person name="Worley K.C."/>
            <person name="Wu D."/>
            <person name="Yang S."/>
            <person name="Yao Q.A."/>
            <person name="Ye J."/>
            <person name="Yeh R.-F."/>
            <person name="Zaveri J.S."/>
            <person name="Zhan M."/>
            <person name="Zhang G."/>
            <person name="Zhao Q."/>
            <person name="Zheng L."/>
            <person name="Zheng X.H."/>
            <person name="Zhong F.N."/>
            <person name="Zhong W."/>
            <person name="Zhou X."/>
            <person name="Zhu S.C."/>
            <person name="Zhu X."/>
            <person name="Smith H.O."/>
            <person name="Gibbs R.A."/>
            <person name="Myers E.W."/>
            <person name="Rubin G.M."/>
            <person name="Venter J.C."/>
        </authorList>
    </citation>
    <scope>NUCLEOTIDE SEQUENCE [LARGE SCALE GENOMIC DNA]</scope>
    <source>
        <strain>Berkeley</strain>
    </source>
</reference>
<reference key="4">
    <citation type="journal article" date="2002" name="Genome Biol.">
        <title>Annotation of the Drosophila melanogaster euchromatic genome: a systematic review.</title>
        <authorList>
            <person name="Misra S."/>
            <person name="Crosby M.A."/>
            <person name="Mungall C.J."/>
            <person name="Matthews B.B."/>
            <person name="Campbell K.S."/>
            <person name="Hradecky P."/>
            <person name="Huang Y."/>
            <person name="Kaminker J.S."/>
            <person name="Millburn G.H."/>
            <person name="Prochnik S.E."/>
            <person name="Smith C.D."/>
            <person name="Tupy J.L."/>
            <person name="Whitfield E.J."/>
            <person name="Bayraktaroglu L."/>
            <person name="Berman B.P."/>
            <person name="Bettencourt B.R."/>
            <person name="Celniker S.E."/>
            <person name="de Grey A.D.N.J."/>
            <person name="Drysdale R.A."/>
            <person name="Harris N.L."/>
            <person name="Richter J."/>
            <person name="Russo S."/>
            <person name="Schroeder A.J."/>
            <person name="Shu S.Q."/>
            <person name="Stapleton M."/>
            <person name="Yamada C."/>
            <person name="Ashburner M."/>
            <person name="Gelbart W.M."/>
            <person name="Rubin G.M."/>
            <person name="Lewis S.E."/>
        </authorList>
    </citation>
    <scope>GENOME REANNOTATION</scope>
    <source>
        <strain>Berkeley</strain>
    </source>
</reference>
<reference key="5">
    <citation type="journal article" date="2000" name="Science">
        <title>From sequence to chromosome: the tip of the X chromosome of D. melanogaster.</title>
        <authorList>
            <person name="Benos P.V."/>
            <person name="Gatt M.K."/>
            <person name="Ashburner M."/>
            <person name="Murphy L."/>
            <person name="Harris D."/>
            <person name="Barrell B.G."/>
            <person name="Ferraz C."/>
            <person name="Vidal S."/>
            <person name="Brun C."/>
            <person name="Demailles J."/>
            <person name="Cadieu E."/>
            <person name="Dreano S."/>
            <person name="Gloux S."/>
            <person name="Lelaure V."/>
            <person name="Mottier S."/>
            <person name="Galibert F."/>
            <person name="Borkova D."/>
            <person name="Minana B."/>
            <person name="Kafatos F.C."/>
            <person name="Louis C."/>
            <person name="Siden-Kiamos I."/>
            <person name="Bolshakov S."/>
            <person name="Papagiannakis G."/>
            <person name="Spanos L."/>
            <person name="Cox S."/>
            <person name="Madueno E."/>
            <person name="de Pablos B."/>
            <person name="Modolell J."/>
            <person name="Peter A."/>
            <person name="Schoettler P."/>
            <person name="Werner M."/>
            <person name="Mourkioti F."/>
            <person name="Beinert N."/>
            <person name="Dowe G."/>
            <person name="Schaefer U."/>
            <person name="Jaeckle H."/>
            <person name="Bucheton A."/>
            <person name="Callister D.M."/>
            <person name="Campbell L.A."/>
            <person name="Darlamitsou A."/>
            <person name="Henderson N.S."/>
            <person name="McMillan P.J."/>
            <person name="Salles C."/>
            <person name="Tait E.A."/>
            <person name="Valenti P."/>
            <person name="Saunders R.D.C."/>
            <person name="Glover D.M."/>
        </authorList>
    </citation>
    <scope>NUCLEOTIDE SEQUENCE [LARGE SCALE GENOMIC DNA]</scope>
    <source>
        <strain>Oregon-R</strain>
    </source>
</reference>
<reference key="6">
    <citation type="journal article" date="2002" name="Genome Biol.">
        <title>A Drosophila full-length cDNA resource.</title>
        <authorList>
            <person name="Stapleton M."/>
            <person name="Carlson J.W."/>
            <person name="Brokstein P."/>
            <person name="Yu C."/>
            <person name="Champe M."/>
            <person name="George R.A."/>
            <person name="Guarin H."/>
            <person name="Kronmiller B."/>
            <person name="Pacleb J.M."/>
            <person name="Park S."/>
            <person name="Wan K.H."/>
            <person name="Rubin G.M."/>
            <person name="Celniker S.E."/>
        </authorList>
    </citation>
    <scope>NUCLEOTIDE SEQUENCE [LARGE SCALE MRNA]</scope>
    <source>
        <strain>Berkeley</strain>
        <tissue>Embryo</tissue>
    </source>
</reference>
<reference key="7">
    <citation type="journal article" date="2008" name="J. Proteome Res.">
        <title>Phosphoproteome analysis of Drosophila melanogaster embryos.</title>
        <authorList>
            <person name="Zhai B."/>
            <person name="Villen J."/>
            <person name="Beausoleil S.A."/>
            <person name="Mintseris J."/>
            <person name="Gygi S.P."/>
        </authorList>
    </citation>
    <scope>PHOSPHORYLATION [LARGE SCALE ANALYSIS] AT THR-478; THR-484 AND THR-489</scope>
    <scope>IDENTIFICATION BY MASS SPECTROMETRY</scope>
    <source>
        <tissue>Embryo</tissue>
    </source>
</reference>
<accession>P25028</accession>
<accession>Q8T057</accession>
<accession>Q9W4W0</accession>
<accession>Q9W4W1</accession>
<proteinExistence type="evidence at protein level"/>
<gene>
    <name type="primary">fs(1)Ya</name>
    <name type="ORF">CG2707</name>
</gene>
<evidence type="ECO:0000256" key="1">
    <source>
        <dbReference type="SAM" id="MobiDB-lite"/>
    </source>
</evidence>
<evidence type="ECO:0000269" key="2">
    <source>
    </source>
</evidence>
<evidence type="ECO:0000305" key="3"/>
<dbReference type="EMBL" id="M38442">
    <property type="protein sequence ID" value="AAA65184.1"/>
    <property type="molecule type" value="mRNA"/>
</dbReference>
<dbReference type="EMBL" id="AE014298">
    <property type="protein sequence ID" value="AAF45816.2"/>
    <property type="molecule type" value="Genomic_DNA"/>
</dbReference>
<dbReference type="EMBL" id="AL021728">
    <property type="protein sequence ID" value="CAA16819.1"/>
    <property type="molecule type" value="Genomic_DNA"/>
</dbReference>
<dbReference type="EMBL" id="AY069542">
    <property type="protein sequence ID" value="AAL39687.1"/>
    <property type="molecule type" value="mRNA"/>
</dbReference>
<dbReference type="PIR" id="A38436">
    <property type="entry name" value="A38436"/>
</dbReference>
<dbReference type="PIR" id="T13648">
    <property type="entry name" value="T13648"/>
</dbReference>
<dbReference type="RefSeq" id="NP_477493.2">
    <property type="nucleotide sequence ID" value="NM_058145.4"/>
</dbReference>
<dbReference type="BioGRID" id="57794">
    <property type="interactions" value="2"/>
</dbReference>
<dbReference type="DIP" id="DIP-115N"/>
<dbReference type="FunCoup" id="P25028">
    <property type="interactions" value="5"/>
</dbReference>
<dbReference type="IntAct" id="P25028">
    <property type="interactions" value="2"/>
</dbReference>
<dbReference type="MINT" id="P25028"/>
<dbReference type="STRING" id="7227.FBpp0070463"/>
<dbReference type="GlyGen" id="P25028">
    <property type="glycosylation" value="1 site"/>
</dbReference>
<dbReference type="iPTMnet" id="P25028"/>
<dbReference type="PaxDb" id="7227-FBpp0070463"/>
<dbReference type="DNASU" id="31263"/>
<dbReference type="EnsemblMetazoa" id="FBtr0070485">
    <property type="protein sequence ID" value="FBpp0070463"/>
    <property type="gene ID" value="FBgn0000927"/>
</dbReference>
<dbReference type="GeneID" id="31263"/>
<dbReference type="KEGG" id="dme:Dmel_CG2707"/>
<dbReference type="AGR" id="FB:FBgn0000927"/>
<dbReference type="CTD" id="31263"/>
<dbReference type="FlyBase" id="FBgn0000927">
    <property type="gene designation" value="fs(1)Ya"/>
</dbReference>
<dbReference type="VEuPathDB" id="VectorBase:FBgn0000927"/>
<dbReference type="eggNOG" id="ENOG502SW8S">
    <property type="taxonomic scope" value="Eukaryota"/>
</dbReference>
<dbReference type="HOGENOM" id="CLU_015130_1_0_1"/>
<dbReference type="InParanoid" id="P25028"/>
<dbReference type="OMA" id="MFAKPKE"/>
<dbReference type="OrthoDB" id="8122210at2759"/>
<dbReference type="PhylomeDB" id="P25028"/>
<dbReference type="BioGRID-ORCS" id="31263">
    <property type="hits" value="0 hits in 1 CRISPR screen"/>
</dbReference>
<dbReference type="GenomeRNAi" id="31263"/>
<dbReference type="PRO" id="PR:P25028"/>
<dbReference type="Proteomes" id="UP000000803">
    <property type="component" value="Chromosome X"/>
</dbReference>
<dbReference type="Bgee" id="FBgn0000927">
    <property type="expression patterns" value="Expressed in oocyte and 31 other cell types or tissues"/>
</dbReference>
<dbReference type="GO" id="GO:0005737">
    <property type="term" value="C:cytoplasm"/>
    <property type="evidence" value="ECO:0000314"/>
    <property type="project" value="FlyBase"/>
</dbReference>
<dbReference type="GO" id="GO:0005635">
    <property type="term" value="C:nuclear envelope"/>
    <property type="evidence" value="ECO:0000314"/>
    <property type="project" value="FlyBase"/>
</dbReference>
<dbReference type="GO" id="GO:0005652">
    <property type="term" value="C:nuclear lamina"/>
    <property type="evidence" value="ECO:0000314"/>
    <property type="project" value="FlyBase"/>
</dbReference>
<dbReference type="GO" id="GO:0005654">
    <property type="term" value="C:nucleoplasm"/>
    <property type="evidence" value="ECO:0007669"/>
    <property type="project" value="UniProtKB-SubCell"/>
</dbReference>
<dbReference type="GO" id="GO:0051301">
    <property type="term" value="P:cell division"/>
    <property type="evidence" value="ECO:0007669"/>
    <property type="project" value="UniProtKB-KW"/>
</dbReference>
<dbReference type="GO" id="GO:0006325">
    <property type="term" value="P:chromatin organization"/>
    <property type="evidence" value="ECO:0000315"/>
    <property type="project" value="FlyBase"/>
</dbReference>
<dbReference type="GO" id="GO:0030261">
    <property type="term" value="P:chromosome condensation"/>
    <property type="evidence" value="ECO:0000315"/>
    <property type="project" value="FlyBase"/>
</dbReference>
<dbReference type="GO" id="GO:0006260">
    <property type="term" value="P:DNA replication"/>
    <property type="evidence" value="ECO:0000316"/>
    <property type="project" value="FlyBase"/>
</dbReference>
<dbReference type="GO" id="GO:0000278">
    <property type="term" value="P:mitotic cell cycle"/>
    <property type="evidence" value="ECO:0000315"/>
    <property type="project" value="FlyBase"/>
</dbReference>
<dbReference type="GO" id="GO:0006997">
    <property type="term" value="P:nucleus organization"/>
    <property type="evidence" value="ECO:0000315"/>
    <property type="project" value="FlyBase"/>
</dbReference>
<dbReference type="GO" id="GO:0007344">
    <property type="term" value="P:pronuclear fusion"/>
    <property type="evidence" value="ECO:0000315"/>
    <property type="project" value="FlyBase"/>
</dbReference>
<dbReference type="PROSITE" id="PS00028">
    <property type="entry name" value="ZINC_FINGER_C2H2_1"/>
    <property type="match status" value="1"/>
</dbReference>
<feature type="chain" id="PRO_0000087358" description="Mitosis initiation protein fs(1)Ya">
    <location>
        <begin position="1"/>
        <end position="696"/>
    </location>
</feature>
<feature type="region of interest" description="Disordered" evidence="1">
    <location>
        <begin position="245"/>
        <end position="285"/>
    </location>
</feature>
<feature type="region of interest" description="Disordered" evidence="1">
    <location>
        <begin position="336"/>
        <end position="379"/>
    </location>
</feature>
<feature type="region of interest" description="Rich in charged AA">
    <location>
        <begin position="448"/>
        <end position="696"/>
    </location>
</feature>
<feature type="region of interest" description="Disordered" evidence="1">
    <location>
        <begin position="457"/>
        <end position="492"/>
    </location>
</feature>
<feature type="region of interest" description="Disordered" evidence="1">
    <location>
        <begin position="555"/>
        <end position="586"/>
    </location>
</feature>
<feature type="region of interest" description="Disordered" evidence="1">
    <location>
        <begin position="603"/>
        <end position="696"/>
    </location>
</feature>
<feature type="short sequence motif" description="Nuclear localization signal" evidence="3">
    <location>
        <begin position="512"/>
        <end position="520"/>
    </location>
</feature>
<feature type="short sequence motif" description="Nuclear localization signal" evidence="3">
    <location>
        <begin position="534"/>
        <end position="538"/>
    </location>
</feature>
<feature type="compositionally biased region" description="Low complexity" evidence="1">
    <location>
        <begin position="270"/>
        <end position="281"/>
    </location>
</feature>
<feature type="compositionally biased region" description="Low complexity" evidence="1">
    <location>
        <begin position="361"/>
        <end position="379"/>
    </location>
</feature>
<feature type="compositionally biased region" description="Acidic residues" evidence="1">
    <location>
        <begin position="557"/>
        <end position="569"/>
    </location>
</feature>
<feature type="compositionally biased region" description="Basic and acidic residues" evidence="1">
    <location>
        <begin position="607"/>
        <end position="624"/>
    </location>
</feature>
<feature type="compositionally biased region" description="Basic and acidic residues" evidence="1">
    <location>
        <begin position="685"/>
        <end position="696"/>
    </location>
</feature>
<feature type="modified residue" description="Phosphothreonine" evidence="2">
    <location>
        <position position="478"/>
    </location>
</feature>
<feature type="modified residue" description="Phosphothreonine" evidence="2">
    <location>
        <position position="484"/>
    </location>
</feature>
<feature type="modified residue" description="Phosphothreonine" evidence="2">
    <location>
        <position position="489"/>
    </location>
</feature>
<feature type="sequence conflict" description="In Ref. 5; CAA16819." evidence="3" ref="5">
    <location>
        <position position="270"/>
    </location>
</feature>
<feature type="sequence conflict" description="In Ref. 5; CAA16819." evidence="3" ref="5">
    <original>K</original>
    <variation>E</variation>
    <location>
        <position position="412"/>
    </location>
</feature>
<feature type="sequence conflict" description="In Ref. 1; AAA65184." evidence="3" ref="1">
    <original>L</original>
    <variation>P</variation>
    <location>
        <position position="673"/>
    </location>
</feature>
<comment type="function">
    <text>Cell cycle-dependent nuclear envelope component required for embryonic mitosis.</text>
</comment>
<comment type="subcellular location">
    <subcellularLocation>
        <location>Nucleus envelope</location>
    </subcellularLocation>
    <subcellularLocation>
        <location>Nucleus</location>
        <location>Nucleoplasm</location>
    </subcellularLocation>
    <subcellularLocation>
        <location>Cytoplasm</location>
    </subcellularLocation>
    <text>In the nuclear envelope during interphase to metaphase. And in the nucleoplasm and cytoplasm during anaphase and telophase.</text>
</comment>
<comment type="developmental stage">
    <text>Maternal protein synthesized during postoogenic maturation and persisting throughout embryogenesis.</text>
</comment>
<comment type="miscellaneous">
    <text>The OPA repeat-containing and the Ser/Thr-rich regions might be involved in protein-protein interactions with the major protein-rich layer of the nuclear envelope.</text>
</comment>